<comment type="function">
    <text evidence="1">Can bind to ATTGG and CCAAT motifs (Y-box motifs) of single-stranded oligonucleotides.</text>
</comment>
<comment type="subunit">
    <text evidence="1">Homodimer.</text>
</comment>
<comment type="subcellular location">
    <subcellularLocation>
        <location evidence="1">Cytoplasm</location>
    </subcellularLocation>
</comment>
<name>CSPA_BACCR</name>
<dbReference type="EMBL" id="AE016877">
    <property type="protein sequence ID" value="AAP08118.1"/>
    <property type="molecule type" value="Genomic_DNA"/>
</dbReference>
<dbReference type="RefSeq" id="NP_830917.1">
    <property type="nucleotide sequence ID" value="NC_004722.1"/>
</dbReference>
<dbReference type="RefSeq" id="WP_000301519.1">
    <property type="nucleotide sequence ID" value="NZ_CP138336.1"/>
</dbReference>
<dbReference type="SMR" id="Q81GQ6"/>
<dbReference type="STRING" id="226900.BC_1131"/>
<dbReference type="GeneID" id="45021150"/>
<dbReference type="KEGG" id="bce:BC1131"/>
<dbReference type="PATRIC" id="fig|226900.8.peg.1092"/>
<dbReference type="HOGENOM" id="CLU_117621_6_3_9"/>
<dbReference type="OrthoDB" id="9805039at2"/>
<dbReference type="Proteomes" id="UP000001417">
    <property type="component" value="Chromosome"/>
</dbReference>
<dbReference type="GO" id="GO:0005737">
    <property type="term" value="C:cytoplasm"/>
    <property type="evidence" value="ECO:0007669"/>
    <property type="project" value="UniProtKB-SubCell"/>
</dbReference>
<dbReference type="GO" id="GO:0003677">
    <property type="term" value="F:DNA binding"/>
    <property type="evidence" value="ECO:0007669"/>
    <property type="project" value="UniProtKB-KW"/>
</dbReference>
<dbReference type="GO" id="GO:0003676">
    <property type="term" value="F:nucleic acid binding"/>
    <property type="evidence" value="ECO:0000318"/>
    <property type="project" value="GO_Central"/>
</dbReference>
<dbReference type="GO" id="GO:0010468">
    <property type="term" value="P:regulation of gene expression"/>
    <property type="evidence" value="ECO:0000318"/>
    <property type="project" value="GO_Central"/>
</dbReference>
<dbReference type="CDD" id="cd04458">
    <property type="entry name" value="CSP_CDS"/>
    <property type="match status" value="1"/>
</dbReference>
<dbReference type="FunFam" id="2.40.50.140:FF:000006">
    <property type="entry name" value="Cold shock protein CspC"/>
    <property type="match status" value="1"/>
</dbReference>
<dbReference type="Gene3D" id="6.20.370.130">
    <property type="match status" value="1"/>
</dbReference>
<dbReference type="Gene3D" id="2.40.50.140">
    <property type="entry name" value="Nucleic acid-binding proteins"/>
    <property type="match status" value="1"/>
</dbReference>
<dbReference type="InterPro" id="IPR012156">
    <property type="entry name" value="Cold_shock_CspA"/>
</dbReference>
<dbReference type="InterPro" id="IPR050181">
    <property type="entry name" value="Cold_shock_domain"/>
</dbReference>
<dbReference type="InterPro" id="IPR011129">
    <property type="entry name" value="CSD"/>
</dbReference>
<dbReference type="InterPro" id="IPR019844">
    <property type="entry name" value="CSD_CS"/>
</dbReference>
<dbReference type="InterPro" id="IPR002059">
    <property type="entry name" value="CSP_DNA-bd"/>
</dbReference>
<dbReference type="InterPro" id="IPR012340">
    <property type="entry name" value="NA-bd_OB-fold"/>
</dbReference>
<dbReference type="PANTHER" id="PTHR11544">
    <property type="entry name" value="COLD SHOCK DOMAIN CONTAINING PROTEINS"/>
    <property type="match status" value="1"/>
</dbReference>
<dbReference type="Pfam" id="PF00313">
    <property type="entry name" value="CSD"/>
    <property type="match status" value="1"/>
</dbReference>
<dbReference type="PIRSF" id="PIRSF002599">
    <property type="entry name" value="Cold_shock_A"/>
    <property type="match status" value="1"/>
</dbReference>
<dbReference type="PRINTS" id="PR00050">
    <property type="entry name" value="COLDSHOCK"/>
</dbReference>
<dbReference type="SMART" id="SM00357">
    <property type="entry name" value="CSP"/>
    <property type="match status" value="1"/>
</dbReference>
<dbReference type="SUPFAM" id="SSF50249">
    <property type="entry name" value="Nucleic acid-binding proteins"/>
    <property type="match status" value="1"/>
</dbReference>
<dbReference type="PROSITE" id="PS00352">
    <property type="entry name" value="CSD_1"/>
    <property type="match status" value="1"/>
</dbReference>
<dbReference type="PROSITE" id="PS51857">
    <property type="entry name" value="CSD_2"/>
    <property type="match status" value="1"/>
</dbReference>
<feature type="chain" id="PRO_0000100283" description="Major cold shock protein CspA">
    <location>
        <begin position="1"/>
        <end position="67"/>
    </location>
</feature>
<feature type="domain" description="CSD">
    <location>
        <begin position="5"/>
        <end position="64"/>
    </location>
</feature>
<reference key="1">
    <citation type="journal article" date="2003" name="Nature">
        <title>Genome sequence of Bacillus cereus and comparative analysis with Bacillus anthracis.</title>
        <authorList>
            <person name="Ivanova N."/>
            <person name="Sorokin A."/>
            <person name="Anderson I."/>
            <person name="Galleron N."/>
            <person name="Candelon B."/>
            <person name="Kapatral V."/>
            <person name="Bhattacharyya A."/>
            <person name="Reznik G."/>
            <person name="Mikhailova N."/>
            <person name="Lapidus A."/>
            <person name="Chu L."/>
            <person name="Mazur M."/>
            <person name="Goltsman E."/>
            <person name="Larsen N."/>
            <person name="D'Souza M."/>
            <person name="Walunas T."/>
            <person name="Grechkin Y."/>
            <person name="Pusch G."/>
            <person name="Haselkorn R."/>
            <person name="Fonstein M."/>
            <person name="Ehrlich S.D."/>
            <person name="Overbeek R."/>
            <person name="Kyrpides N.C."/>
        </authorList>
    </citation>
    <scope>NUCLEOTIDE SEQUENCE [LARGE SCALE GENOMIC DNA]</scope>
    <source>
        <strain>ATCC 14579 / DSM 31 / CCUG 7414 / JCM 2152 / NBRC 15305 / NCIMB 9373 / NCTC 2599 / NRRL B-3711</strain>
    </source>
</reference>
<sequence length="67" mass="7475">MAVTGQVKWFNNEKGFGFIEVPGENDVFVHFSAIETDGFKSLEEGQKVSFEIEEGNRGPQAKNVIKL</sequence>
<protein>
    <recommendedName>
        <fullName>Major cold shock protein CspA</fullName>
    </recommendedName>
</protein>
<organism>
    <name type="scientific">Bacillus cereus (strain ATCC 14579 / DSM 31 / CCUG 7414 / JCM 2152 / NBRC 15305 / NCIMB 9373 / NCTC 2599 / NRRL B-3711)</name>
    <dbReference type="NCBI Taxonomy" id="226900"/>
    <lineage>
        <taxon>Bacteria</taxon>
        <taxon>Bacillati</taxon>
        <taxon>Bacillota</taxon>
        <taxon>Bacilli</taxon>
        <taxon>Bacillales</taxon>
        <taxon>Bacillaceae</taxon>
        <taxon>Bacillus</taxon>
        <taxon>Bacillus cereus group</taxon>
    </lineage>
</organism>
<gene>
    <name type="primary">cspA</name>
    <name type="ordered locus">BC_1131</name>
</gene>
<proteinExistence type="inferred from homology"/>
<evidence type="ECO:0000250" key="1"/>
<accession>Q81GQ6</accession>
<keyword id="KW-0010">Activator</keyword>
<keyword id="KW-0963">Cytoplasm</keyword>
<keyword id="KW-0238">DNA-binding</keyword>
<keyword id="KW-1185">Reference proteome</keyword>
<keyword id="KW-0804">Transcription</keyword>
<keyword id="KW-0805">Transcription regulation</keyword>